<gene>
    <name type="primary">SCC4</name>
    <name type="ordered locus">YER147C</name>
</gene>
<name>SCC4_YEAST</name>
<keyword id="KW-0002">3D-structure</keyword>
<keyword id="KW-0131">Cell cycle</keyword>
<keyword id="KW-0132">Cell division</keyword>
<keyword id="KW-0159">Chromosome partition</keyword>
<keyword id="KW-0903">Direct protein sequencing</keyword>
<keyword id="KW-0498">Mitosis</keyword>
<keyword id="KW-0539">Nucleus</keyword>
<keyword id="KW-1185">Reference proteome</keyword>
<feature type="chain" id="PRO_0000193217" description="MAU2 chromatid cohesion factor homolog">
    <location>
        <begin position="1"/>
        <end position="624"/>
    </location>
</feature>
<feature type="mutagenesis site" description="In scc4m7; eliminates centromeric localization of SCC2 in mitotic cells and reduces association of the cohesin subunit SCC1 with the centromere and pericentromere; when associated with A-298; D-299; A-313; A-324; D-327; and D-331." evidence="4">
    <original>L</original>
    <variation>K</variation>
    <location>
        <position position="256"/>
    </location>
</feature>
<feature type="mutagenesis site" description="In scc4m7; eliminates centromeric localization of SCC2 in mitotic cells and reduces association of the cohesin subunit SCC1 with the centromere and pericentromere; when associated with K-256; D-299; A-313; A-324; D-327; and D-331." evidence="4">
    <original>Y</original>
    <variation>A</variation>
    <location>
        <position position="298"/>
    </location>
</feature>
<feature type="mutagenesis site" description="In scc4m7; eliminates centromeric localization of SCC2 in mitotic cells and reduces association of the cohesin subunit SCC1 with the centromere and pericentromere; when associated with K-256; A-298; A-313; A-324; D-327; and D-331." evidence="4">
    <original>K</original>
    <variation>D</variation>
    <location>
        <position position="299"/>
    </location>
</feature>
<feature type="mutagenesis site" description="In scc4m7; eliminates centromeric localization of SCC2 in mitotic cells and reduces association of the cohesin subunit SCC1 with the centromere and pericentromere; when associated with K-256; A-298; D-299; A-324; D-327; and D-331." evidence="4">
    <original>Y</original>
    <variation>A</variation>
    <location>
        <position position="313"/>
    </location>
</feature>
<feature type="mutagenesis site" description="In scc4m35; eliminates centromeric localization of SCC2 in mitotic cells and reduces association of the cohesin subunit SCC1 with the centromere and pericentromere; when associated with A-327; A-331; A-540 and A-541. In scc4m7; eliminates centromeric localization of SCC2 in mitotic cells and reduces association of the cohesin subunit SCC1 with the centromere and pericentromere; when associated with K-256; A-298; D-299; A-313; D-327; and D-331." evidence="4">
    <original>F</original>
    <variation>A</variation>
    <location>
        <position position="324"/>
    </location>
</feature>
<feature type="mutagenesis site" description="In scc4m35; eliminates centromeric localization of SCC2 in mitotic cells and reduces association of the cohesin subunit SCC1 with the centromere and pericentromere; when associated with A-324; A-331; A-540 and A-541." evidence="4">
    <original>K</original>
    <variation>A</variation>
    <location>
        <position position="327"/>
    </location>
</feature>
<feature type="mutagenesis site" description="In scc4m7; eliminates centromeric localization of SCC2 in mitotic cells and reduces association of the cohesin subunit SCC1 with the centromere and pericentromere; when associated with K-256; A-298; D-299; A-313; A-324 and D-331." evidence="4">
    <original>K</original>
    <variation>D</variation>
    <location>
        <position position="327"/>
    </location>
</feature>
<feature type="mutagenesis site" description="In scc4m35; eliminates centromeric localization of SCC2 in mitotic cells and reduces association of the cohesin subunit SCC1 with the centromere and pericentromere; when associated with A-324; A-327; A-540 and A-541." evidence="4">
    <original>K</original>
    <variation>A</variation>
    <location>
        <position position="331"/>
    </location>
</feature>
<feature type="mutagenesis site" description="In scc4m7; eliminates centromeric localization of SCC2 in mitotic cells and reduces association of the cohesin subunit SCC1 with the centromere and pericentromere; when associated with K-256; A-298; D-299; A-313; A-324 and D-327." evidence="4">
    <original>K</original>
    <variation>D</variation>
    <location>
        <position position="331"/>
    </location>
</feature>
<feature type="mutagenesis site" description="In scc4m35; eliminates centromeric localization of SCC2 in mitotic cells and reduces association of the cohesin subunit SCC1 with the centromere and pericentromere; when associated with A-324; A-327; A-331 and A-541." evidence="4">
    <original>K</original>
    <variation>A</variation>
    <location>
        <position position="540"/>
    </location>
</feature>
<feature type="mutagenesis site" description="In scc4m35; eliminates centromeric localization of SCC2 in mitotic cells and reduces association of the cohesin subunit SCC1 with the centromere and pericentromere; when associated with A-324; A-327; A-331 and A-540." evidence="4">
    <original>K</original>
    <variation>A</variation>
    <location>
        <position position="541"/>
    </location>
</feature>
<feature type="strand" evidence="7">
    <location>
        <begin position="7"/>
        <end position="9"/>
    </location>
</feature>
<feature type="helix" evidence="7">
    <location>
        <begin position="10"/>
        <end position="26"/>
    </location>
</feature>
<feature type="turn" evidence="7">
    <location>
        <begin position="27"/>
        <end position="29"/>
    </location>
</feature>
<feature type="helix" evidence="7">
    <location>
        <begin position="34"/>
        <end position="57"/>
    </location>
</feature>
<feature type="helix" evidence="7">
    <location>
        <begin position="62"/>
        <end position="79"/>
    </location>
</feature>
<feature type="helix" evidence="7">
    <location>
        <begin position="83"/>
        <end position="100"/>
    </location>
</feature>
<feature type="turn" evidence="7">
    <location>
        <begin position="101"/>
        <end position="103"/>
    </location>
</feature>
<feature type="helix" evidence="7">
    <location>
        <begin position="107"/>
        <end position="118"/>
    </location>
</feature>
<feature type="helix" evidence="7">
    <location>
        <begin position="120"/>
        <end position="125"/>
    </location>
</feature>
<feature type="helix" evidence="7">
    <location>
        <begin position="128"/>
        <end position="146"/>
    </location>
</feature>
<feature type="helix" evidence="7">
    <location>
        <begin position="151"/>
        <end position="170"/>
    </location>
</feature>
<feature type="helix" evidence="7">
    <location>
        <begin position="174"/>
        <end position="187"/>
    </location>
</feature>
<feature type="helix" evidence="7">
    <location>
        <begin position="193"/>
        <end position="209"/>
    </location>
</feature>
<feature type="helix" evidence="7">
    <location>
        <begin position="215"/>
        <end position="222"/>
    </location>
</feature>
<feature type="helix" evidence="7">
    <location>
        <begin position="226"/>
        <end position="229"/>
    </location>
</feature>
<feature type="helix" evidence="7">
    <location>
        <begin position="231"/>
        <end position="247"/>
    </location>
</feature>
<feature type="helix" evidence="7">
    <location>
        <begin position="253"/>
        <end position="272"/>
    </location>
</feature>
<feature type="turn" evidence="7">
    <location>
        <begin position="273"/>
        <end position="275"/>
    </location>
</feature>
<feature type="strand" evidence="7">
    <location>
        <begin position="278"/>
        <end position="283"/>
    </location>
</feature>
<feature type="strand" evidence="7">
    <location>
        <begin position="286"/>
        <end position="291"/>
    </location>
</feature>
<feature type="helix" evidence="7">
    <location>
        <begin position="293"/>
        <end position="296"/>
    </location>
</feature>
<feature type="helix" evidence="7">
    <location>
        <begin position="298"/>
        <end position="312"/>
    </location>
</feature>
<feature type="turn" evidence="7">
    <location>
        <begin position="313"/>
        <end position="318"/>
    </location>
</feature>
<feature type="helix" evidence="7">
    <location>
        <begin position="320"/>
        <end position="341"/>
    </location>
</feature>
<feature type="helix" evidence="7">
    <location>
        <begin position="350"/>
        <end position="379"/>
    </location>
</feature>
<feature type="turn" evidence="8">
    <location>
        <begin position="391"/>
        <end position="395"/>
    </location>
</feature>
<feature type="helix" evidence="7">
    <location>
        <begin position="396"/>
        <end position="407"/>
    </location>
</feature>
<feature type="helix" evidence="7">
    <location>
        <begin position="413"/>
        <end position="421"/>
    </location>
</feature>
<feature type="helix" evidence="7">
    <location>
        <begin position="427"/>
        <end position="447"/>
    </location>
</feature>
<feature type="turn" evidence="7">
    <location>
        <begin position="450"/>
        <end position="452"/>
    </location>
</feature>
<feature type="helix" evidence="7">
    <location>
        <begin position="453"/>
        <end position="471"/>
    </location>
</feature>
<feature type="helix" evidence="7">
    <location>
        <begin position="475"/>
        <end position="478"/>
    </location>
</feature>
<feature type="helix" evidence="7">
    <location>
        <begin position="480"/>
        <end position="494"/>
    </location>
</feature>
<feature type="turn" evidence="7">
    <location>
        <begin position="496"/>
        <end position="498"/>
    </location>
</feature>
<feature type="helix" evidence="7">
    <location>
        <begin position="507"/>
        <end position="524"/>
    </location>
</feature>
<feature type="helix" evidence="7">
    <location>
        <begin position="543"/>
        <end position="556"/>
    </location>
</feature>
<feature type="helix" evidence="7">
    <location>
        <begin position="561"/>
        <end position="574"/>
    </location>
</feature>
<feature type="helix" evidence="7">
    <location>
        <begin position="575"/>
        <end position="577"/>
    </location>
</feature>
<feature type="strand" evidence="8">
    <location>
        <begin position="578"/>
        <end position="580"/>
    </location>
</feature>
<feature type="helix" evidence="7">
    <location>
        <begin position="582"/>
        <end position="599"/>
    </location>
</feature>
<feature type="helix" evidence="7">
    <location>
        <begin position="602"/>
        <end position="619"/>
    </location>
</feature>
<organism>
    <name type="scientific">Saccharomyces cerevisiae (strain ATCC 204508 / S288c)</name>
    <name type="common">Baker's yeast</name>
    <dbReference type="NCBI Taxonomy" id="559292"/>
    <lineage>
        <taxon>Eukaryota</taxon>
        <taxon>Fungi</taxon>
        <taxon>Dikarya</taxon>
        <taxon>Ascomycota</taxon>
        <taxon>Saccharomycotina</taxon>
        <taxon>Saccharomycetes</taxon>
        <taxon>Saccharomycetales</taxon>
        <taxon>Saccharomycetaceae</taxon>
        <taxon>Saccharomyces</taxon>
    </lineage>
</organism>
<protein>
    <recommendedName>
        <fullName>MAU2 chromatid cohesion factor homolog</fullName>
    </recommendedName>
    <alternativeName>
        <fullName>Sister chromatid cohesion protein 4</fullName>
    </alternativeName>
</protein>
<reference key="1">
    <citation type="journal article" date="1997" name="Nature">
        <title>The nucleotide sequence of Saccharomyces cerevisiae chromosome V.</title>
        <authorList>
            <person name="Dietrich F.S."/>
            <person name="Mulligan J.T."/>
            <person name="Hennessy K.M."/>
            <person name="Yelton M.A."/>
            <person name="Allen E."/>
            <person name="Araujo R."/>
            <person name="Aviles E."/>
            <person name="Berno A."/>
            <person name="Brennan T."/>
            <person name="Carpenter J."/>
            <person name="Chen E."/>
            <person name="Cherry J.M."/>
            <person name="Chung E."/>
            <person name="Duncan M."/>
            <person name="Guzman E."/>
            <person name="Hartzell G."/>
            <person name="Hunicke-Smith S."/>
            <person name="Hyman R.W."/>
            <person name="Kayser A."/>
            <person name="Komp C."/>
            <person name="Lashkari D."/>
            <person name="Lew H."/>
            <person name="Lin D."/>
            <person name="Mosedale D."/>
            <person name="Nakahara K."/>
            <person name="Namath A."/>
            <person name="Norgren R."/>
            <person name="Oefner P."/>
            <person name="Oh C."/>
            <person name="Petel F.X."/>
            <person name="Roberts D."/>
            <person name="Sehl P."/>
            <person name="Schramm S."/>
            <person name="Shogren T."/>
            <person name="Smith V."/>
            <person name="Taylor P."/>
            <person name="Wei Y."/>
            <person name="Botstein D."/>
            <person name="Davis R.W."/>
        </authorList>
    </citation>
    <scope>NUCLEOTIDE SEQUENCE [LARGE SCALE GENOMIC DNA]</scope>
    <source>
        <strain>ATCC 204508 / S288c</strain>
    </source>
</reference>
<reference key="2">
    <citation type="journal article" date="2014" name="G3 (Bethesda)">
        <title>The reference genome sequence of Saccharomyces cerevisiae: Then and now.</title>
        <authorList>
            <person name="Engel S.R."/>
            <person name="Dietrich F.S."/>
            <person name="Fisk D.G."/>
            <person name="Binkley G."/>
            <person name="Balakrishnan R."/>
            <person name="Costanzo M.C."/>
            <person name="Dwight S.S."/>
            <person name="Hitz B.C."/>
            <person name="Karra K."/>
            <person name="Nash R.S."/>
            <person name="Weng S."/>
            <person name="Wong E.D."/>
            <person name="Lloyd P."/>
            <person name="Skrzypek M.S."/>
            <person name="Miyasato S.R."/>
            <person name="Simison M."/>
            <person name="Cherry J.M."/>
        </authorList>
    </citation>
    <scope>GENOME REANNOTATION</scope>
    <source>
        <strain>ATCC 204508 / S288c</strain>
    </source>
</reference>
<reference key="3">
    <citation type="journal article" date="2000" name="Mol. Cell">
        <title>Cohesin's binding to chromosomes depends on a separate complex consisting of Scc2 and Scc4 proteins.</title>
        <authorList>
            <person name="Ciosk R."/>
            <person name="Shirayama M."/>
            <person name="Shevchenko A."/>
            <person name="Tanaka T."/>
            <person name="Toth A."/>
            <person name="Shevchenko A."/>
            <person name="Nasmyth K."/>
        </authorList>
    </citation>
    <scope>PROTEIN SEQUENCE OF 390-398</scope>
    <scope>FUNCTION</scope>
    <scope>INTERACTION WITH SCC2</scope>
    <scope>SUBCELLULAR LOCATION</scope>
</reference>
<reference key="4">
    <citation type="journal article" date="2003" name="Nature">
        <title>Global analysis of protein expression in yeast.</title>
        <authorList>
            <person name="Ghaemmaghami S."/>
            <person name="Huh W.-K."/>
            <person name="Bower K."/>
            <person name="Howson R.W."/>
            <person name="Belle A."/>
            <person name="Dephoure N."/>
            <person name="O'Shea E.K."/>
            <person name="Weissman J.S."/>
        </authorList>
    </citation>
    <scope>LEVEL OF PROTEIN EXPRESSION [LARGE SCALE ANALYSIS]</scope>
</reference>
<reference key="5">
    <citation type="journal article" date="2014" name="Nat. Genet.">
        <title>The Scc2-Scc4 complex acts in sister chromatid cohesion and transcriptional regulation by maintaining nucleosome-free regions.</title>
        <authorList>
            <person name="Lopez-Serra L."/>
            <person name="Kelly G."/>
            <person name="Patel H."/>
            <person name="Stewart A."/>
            <person name="Uhlmann F."/>
        </authorList>
    </citation>
    <scope>FUNCTION</scope>
    <scope>SUBCELLULAR LOCATION</scope>
    <source>
        <strain evidence="5">ATCC 200060 / W303</strain>
    </source>
</reference>
<reference key="6">
    <citation type="journal article" date="2015" name="Elife">
        <title>Structural evidence for Scc4-dependent localization of cohesin loading.</title>
        <authorList>
            <person name="Hinshaw S.M."/>
            <person name="Makrantoni V."/>
            <person name="Kerr A."/>
            <person name="Marston A.L."/>
            <person name="Harrison S.C."/>
        </authorList>
    </citation>
    <scope>X-RAY CRYSTALLOGRAPHY (2.08 ANGSTROMS) IN COMPLEX WITH SCC2</scope>
    <scope>MUTAGENESIS OF LEU-256; TYR-298; LYS-299; TYR-313; PHE-324; LYS-327; LYS-331; LYS-540 AND LYS-541</scope>
</reference>
<accession>P40090</accession>
<accession>D3DM54</accession>
<comment type="function">
    <text evidence="1 3 4">Involved in sister chromatid cohesion (PubMed:10882066). Forms a complex with SCC2, which is required for the association of the cohesin complex with chromosomes (PubMed:10882066, PubMed:26038942). Binds to the nucleosome-free promoter regions of ribosomal protein genes and tRNA genes (PubMed:25173104).</text>
</comment>
<comment type="subunit">
    <text evidence="1 4">Interacts with SCC2 to form the cohesin loading complex.</text>
</comment>
<comment type="interaction">
    <interactant intactId="EBI-16679">
        <id>P40090</id>
    </interactant>
    <interactant intactId="EBI-16662">
        <id>Q04002</id>
        <label>SCC2</label>
    </interactant>
    <organismsDiffer>false</organismsDiffer>
    <experiments>6</experiments>
</comment>
<comment type="subcellular location">
    <subcellularLocation>
        <location evidence="1 3">Nucleus</location>
    </subcellularLocation>
    <text evidence="1 3">Associates with chromatin.</text>
</comment>
<comment type="miscellaneous">
    <text evidence="2">Present with 907 molecules/cell in log phase SD medium.</text>
</comment>
<comment type="similarity">
    <text evidence="6">Belongs to the SCC4/mau-2 family.</text>
</comment>
<dbReference type="EMBL" id="U18917">
    <property type="protein sequence ID" value="AAB64674.1"/>
    <property type="molecule type" value="Genomic_DNA"/>
</dbReference>
<dbReference type="EMBL" id="BK006939">
    <property type="protein sequence ID" value="DAA07808.1"/>
    <property type="molecule type" value="Genomic_DNA"/>
</dbReference>
<dbReference type="PIR" id="S50650">
    <property type="entry name" value="S50650"/>
</dbReference>
<dbReference type="RefSeq" id="NP_011074.3">
    <property type="nucleotide sequence ID" value="NM_001179037.3"/>
</dbReference>
<dbReference type="PDB" id="4XDN">
    <property type="method" value="X-ray"/>
    <property type="resolution" value="2.08 A"/>
    <property type="chains" value="A=1-624"/>
</dbReference>
<dbReference type="PDB" id="5W94">
    <property type="method" value="X-ray"/>
    <property type="resolution" value="3.19 A"/>
    <property type="chains" value="A/C=1-624"/>
</dbReference>
<dbReference type="PDBsum" id="4XDN"/>
<dbReference type="PDBsum" id="5W94"/>
<dbReference type="SMR" id="P40090"/>
<dbReference type="BioGRID" id="36896">
    <property type="interactions" value="346"/>
</dbReference>
<dbReference type="ComplexPortal" id="CPX-1868">
    <property type="entry name" value="SCC2-SCC4 cohesin loader complex"/>
</dbReference>
<dbReference type="DIP" id="DIP-5627N"/>
<dbReference type="FunCoup" id="P40090">
    <property type="interactions" value="180"/>
</dbReference>
<dbReference type="IntAct" id="P40090">
    <property type="interactions" value="3"/>
</dbReference>
<dbReference type="MINT" id="P40090"/>
<dbReference type="STRING" id="4932.YER147C"/>
<dbReference type="iPTMnet" id="P40090"/>
<dbReference type="PaxDb" id="4932-YER147C"/>
<dbReference type="PeptideAtlas" id="P40090"/>
<dbReference type="EnsemblFungi" id="YER147C_mRNA">
    <property type="protein sequence ID" value="YER147C"/>
    <property type="gene ID" value="YER147C"/>
</dbReference>
<dbReference type="GeneID" id="856890"/>
<dbReference type="KEGG" id="sce:YER147C"/>
<dbReference type="AGR" id="SGD:S000000949"/>
<dbReference type="SGD" id="S000000949">
    <property type="gene designation" value="SCC4"/>
</dbReference>
<dbReference type="VEuPathDB" id="FungiDB:YER147C"/>
<dbReference type="eggNOG" id="ENOG502QQXI">
    <property type="taxonomic scope" value="Eukaryota"/>
</dbReference>
<dbReference type="HOGENOM" id="CLU_409364_0_0_1"/>
<dbReference type="InParanoid" id="P40090"/>
<dbReference type="OMA" id="KIASRNC"/>
<dbReference type="OrthoDB" id="4062938at2759"/>
<dbReference type="BioCyc" id="YEAST:G3O-30308-MONOMER"/>
<dbReference type="BioGRID-ORCS" id="856890">
    <property type="hits" value="9 hits in 10 CRISPR screens"/>
</dbReference>
<dbReference type="CD-CODE" id="5F622AE2">
    <property type="entry name" value="Synthetic Condensate 000372"/>
</dbReference>
<dbReference type="EvolutionaryTrace" id="P40090"/>
<dbReference type="PRO" id="PR:P40090"/>
<dbReference type="Proteomes" id="UP000002311">
    <property type="component" value="Chromosome V"/>
</dbReference>
<dbReference type="RNAct" id="P40090">
    <property type="molecule type" value="protein"/>
</dbReference>
<dbReference type="GO" id="GO:0000785">
    <property type="term" value="C:chromatin"/>
    <property type="evidence" value="ECO:0000314"/>
    <property type="project" value="UniProtKB"/>
</dbReference>
<dbReference type="GO" id="GO:0032116">
    <property type="term" value="C:SMC loading complex"/>
    <property type="evidence" value="ECO:0000353"/>
    <property type="project" value="SGD"/>
</dbReference>
<dbReference type="GO" id="GO:0043515">
    <property type="term" value="F:kinetochore binding"/>
    <property type="evidence" value="ECO:0000314"/>
    <property type="project" value="SGD"/>
</dbReference>
<dbReference type="GO" id="GO:0043565">
    <property type="term" value="F:sequence-specific DNA binding"/>
    <property type="evidence" value="ECO:0000314"/>
    <property type="project" value="UniProtKB"/>
</dbReference>
<dbReference type="GO" id="GO:0051301">
    <property type="term" value="P:cell division"/>
    <property type="evidence" value="ECO:0007669"/>
    <property type="project" value="UniProtKB-KW"/>
</dbReference>
<dbReference type="GO" id="GO:0006302">
    <property type="term" value="P:double-strand break repair"/>
    <property type="evidence" value="ECO:0000315"/>
    <property type="project" value="SGD"/>
</dbReference>
<dbReference type="GO" id="GO:0034087">
    <property type="term" value="P:establishment of mitotic sister chromatid cohesion"/>
    <property type="evidence" value="ECO:0000314"/>
    <property type="project" value="ComplexPortal"/>
</dbReference>
<dbReference type="GO" id="GO:0071169">
    <property type="term" value="P:establishment of protein localization to chromatin"/>
    <property type="evidence" value="ECO:0000315"/>
    <property type="project" value="SGD"/>
</dbReference>
<dbReference type="GO" id="GO:0007076">
    <property type="term" value="P:mitotic chromosome condensation"/>
    <property type="evidence" value="ECO:0000315"/>
    <property type="project" value="SGD"/>
</dbReference>
<dbReference type="GO" id="GO:0007064">
    <property type="term" value="P:mitotic sister chromatid cohesion"/>
    <property type="evidence" value="ECO:0000315"/>
    <property type="project" value="SGD"/>
</dbReference>
<dbReference type="GO" id="GO:0070550">
    <property type="term" value="P:rDNA chromatin condensation"/>
    <property type="evidence" value="ECO:0000315"/>
    <property type="project" value="SGD"/>
</dbReference>
<dbReference type="InterPro" id="IPR019440">
    <property type="entry name" value="MAU2"/>
</dbReference>
<dbReference type="Pfam" id="PF10345">
    <property type="entry name" value="Cohesin_load"/>
    <property type="match status" value="1"/>
</dbReference>
<dbReference type="PROSITE" id="PS00455">
    <property type="entry name" value="AMP_BINDING"/>
    <property type="match status" value="1"/>
</dbReference>
<evidence type="ECO:0000269" key="1">
    <source>
    </source>
</evidence>
<evidence type="ECO:0000269" key="2">
    <source>
    </source>
</evidence>
<evidence type="ECO:0000269" key="3">
    <source>
    </source>
</evidence>
<evidence type="ECO:0000269" key="4">
    <source>
    </source>
</evidence>
<evidence type="ECO:0000303" key="5">
    <source>
    </source>
</evidence>
<evidence type="ECO:0000305" key="6"/>
<evidence type="ECO:0007829" key="7">
    <source>
        <dbReference type="PDB" id="4XDN"/>
    </source>
</evidence>
<evidence type="ECO:0007829" key="8">
    <source>
        <dbReference type="PDB" id="5W94"/>
    </source>
</evidence>
<proteinExistence type="evidence at protein level"/>
<sequence length="624" mass="72141">MENLGDKLSISQVYHLAQEYRDHAYSIANKIGSEEGLKQYYGLMNMSIQMFQLLKTKCTLSVLEDSKVTFEMVELLIQETYNFDLAELYISSLKERLQTHQSDTDLVEEIMRCEFLLLHDLPLMRDSKFHYKIALRNCNELVQYMVNLQDELYQNWASVFQYVGVMLCIKLKQHRRVKTSFHGLLSQCREKSQWKWFLNLCYVNYLLNERFPIPEDALQELRSTELHTVGPELYAWKLALEMVIQLCKDGNITDHLNEFKNFFDTNKQSLVTNEGKGCVIKIMPRIALKVELPMIFHYKELKNILLLLQSVSYIVNCYDEKGNFSRKFLPKVYSTTQKLIKNIAAGGVSMNELDSRIQTYKSILEFCEFYKVWEQTLLKGAVVTTESPKLGPSPGYVRLLQAMKVQFEGGGAVEEYTRLAQSGGTSSEVKMISLLNCYTVQAARVSRCSGDKQGELVEQCNKVWLQVEKLLQETDLQFNPIWECTVTILWLFSHFEPFSWNPLPCSDKQRAEYVSKLREFYSSNKFVAGEAVADNRFKLKKALLLQILVNYLGGRMLEHDLGEIYAISAKCFDMCRQQGGMRKVQYVIGIWHLMNCTVAMRGKDVALTNAKLEALVKQITSVKQ</sequence>